<protein>
    <recommendedName>
        <fullName>Cytochrome c oxidase subunit 5A, mitochondrial</fullName>
    </recommendedName>
    <alternativeName>
        <fullName>Cytochrome c oxidase polypeptide Va</fullName>
    </alternativeName>
</protein>
<keyword id="KW-0903">Direct protein sequencing</keyword>
<keyword id="KW-0349">Heme</keyword>
<keyword id="KW-0408">Iron</keyword>
<keyword id="KW-0472">Membrane</keyword>
<keyword id="KW-0479">Metal-binding</keyword>
<keyword id="KW-0496">Mitochondrion</keyword>
<keyword id="KW-0999">Mitochondrion inner membrane</keyword>
<keyword id="KW-1185">Reference proteome</keyword>
<keyword id="KW-0809">Transit peptide</keyword>
<reference key="1">
    <citation type="journal article" date="1998" name="Science">
        <title>Genome sequence of the nematode C. elegans: a platform for investigating biology.</title>
        <authorList>
            <consortium name="The C. elegans sequencing consortium"/>
        </authorList>
    </citation>
    <scope>NUCLEOTIDE SEQUENCE [LARGE SCALE GENOMIC DNA]</scope>
    <source>
        <strain>Bristol N2</strain>
    </source>
</reference>
<reference key="2">
    <citation type="journal article" date="1997" name="Electrophoresis">
        <title>Two-dimensional gel electrophoresis of Caenorhabditis elegans homogenates and identification of protein spots by microsequencing.</title>
        <authorList>
            <person name="Bini L."/>
            <person name="Heid H."/>
            <person name="Liberatori S."/>
            <person name="Geier G."/>
            <person name="Pallini V."/>
            <person name="Zwilling R."/>
        </authorList>
    </citation>
    <scope>PROTEIN SEQUENCE OF 30-41</scope>
    <source>
        <strain>Bristol N2</strain>
    </source>
</reference>
<sequence length="174" mass="20111">MASLTRAVTRLAIAGRQAVRTIATTTPVSGHGDDIMEKWPADKFDNHFINYLNRPEIDGWEVRKALSELHDYDVIPDPKVVEAALRACRRVNDFALAVRFLEAIKIKCGAQKNRDTVYAYIVKQVEPVLKELGIDTPEQLGYGEPEFFVPEPEYWWEKKWYKDYGYDKHPNIQI</sequence>
<evidence type="ECO:0000250" key="1">
    <source>
        <dbReference type="UniProtKB" id="P00427"/>
    </source>
</evidence>
<evidence type="ECO:0000269" key="2">
    <source>
    </source>
</evidence>
<evidence type="ECO:0000305" key="3"/>
<evidence type="ECO:0000312" key="4">
    <source>
        <dbReference type="WormBase" id="Y37D8A.14"/>
    </source>
</evidence>
<organism>
    <name type="scientific">Caenorhabditis elegans</name>
    <dbReference type="NCBI Taxonomy" id="6239"/>
    <lineage>
        <taxon>Eukaryota</taxon>
        <taxon>Metazoa</taxon>
        <taxon>Ecdysozoa</taxon>
        <taxon>Nematoda</taxon>
        <taxon>Chromadorea</taxon>
        <taxon>Rhabditida</taxon>
        <taxon>Rhabditina</taxon>
        <taxon>Rhabditomorpha</taxon>
        <taxon>Rhabditoidea</taxon>
        <taxon>Rhabditidae</taxon>
        <taxon>Peloderinae</taxon>
        <taxon>Caenorhabditis</taxon>
    </lineage>
</organism>
<name>COX5A_CAEEL</name>
<comment type="function">
    <text evidence="1">Component of the cytochrome c oxidase, the last enzyme in the mitochondrial electron transport chain which drives oxidative phosphorylation. The respiratory chain contains 3 multisubunit complexes succinate dehydrogenase (complex II, CII), ubiquinol-cytochrome c oxidoreductase (cytochrome b-c1 complex, complex III, CIII) and cytochrome c oxidase (complex IV, CIV), that cooperate to transfer electrons derived from NADH and succinate to molecular oxygen, creating an electrochemical gradient over the inner membrane that drives transmembrane transport and the ATP synthase. Cytochrome c oxidase is the component of the respiratory chain that catalyzes the reduction of oxygen to water. Electrons originating from reduced cytochrome c in the intermembrane space (IMS) are transferred via the dinuclear copper A center (CU(A)) of subunit 2 and heme A of subunit 1 to the active site in subunit 1, a binuclear center (BNC) formed by heme A3 and copper B (CU(B)). The BNC reduces molecular oxygen to 2 water molecules using 4 electrons from cytochrome c in the IMS and 4 protons from the mitochondrial matrix.</text>
</comment>
<comment type="pathway">
    <text evidence="1">Energy metabolism; oxidative phosphorylation.</text>
</comment>
<comment type="subunit">
    <text evidence="1">Component of the cytochrome c oxidase (complex IV, CIV), a multisubunit enzyme composed of a catalytic core of 3 subunits and several supernumerary subunits. The complex exists as a monomer or a dimer and forms supercomplexes (SCs) in the inner mitochondrial membrane with ubiquinol-cytochrome c oxidoreductase (cytochrome b-c1 complex, complex III, CIII).</text>
</comment>
<comment type="subcellular location">
    <subcellularLocation>
        <location evidence="1">Mitochondrion inner membrane</location>
        <topology evidence="1">Peripheral membrane protein</topology>
        <orientation evidence="1">Matrix side</orientation>
    </subcellularLocation>
</comment>
<comment type="similarity">
    <text evidence="3">Belongs to the cytochrome c oxidase subunit 5A family.</text>
</comment>
<feature type="transit peptide" description="Mitochondrion" evidence="2">
    <location>
        <begin position="1"/>
        <end position="29"/>
    </location>
</feature>
<feature type="chain" id="PRO_0000006103" description="Cytochrome c oxidase subunit 5A, mitochondrial">
    <location>
        <begin position="30"/>
        <end position="174"/>
    </location>
</feature>
<feature type="sequence conflict" description="In Ref. 2; AA sequence." evidence="3" ref="2">
    <original>G</original>
    <variation>H</variation>
    <location>
        <position position="30"/>
    </location>
</feature>
<proteinExistence type="evidence at protein level"/>
<dbReference type="EMBL" id="BX284603">
    <property type="protein sequence ID" value="CAA21532.1"/>
    <property type="molecule type" value="Genomic_DNA"/>
</dbReference>
<dbReference type="PIR" id="T26631">
    <property type="entry name" value="T26631"/>
</dbReference>
<dbReference type="RefSeq" id="NP_499681.1">
    <property type="nucleotide sequence ID" value="NM_067280.8"/>
</dbReference>
<dbReference type="SMR" id="P55954"/>
<dbReference type="BioGRID" id="41880">
    <property type="interactions" value="48"/>
</dbReference>
<dbReference type="DIP" id="DIP-27022N"/>
<dbReference type="FunCoup" id="P55954">
    <property type="interactions" value="1568"/>
</dbReference>
<dbReference type="STRING" id="6239.Y37D8A.14.1"/>
<dbReference type="PaxDb" id="6239-Y37D8A.14"/>
<dbReference type="PeptideAtlas" id="P55954"/>
<dbReference type="EnsemblMetazoa" id="Y37D8A.14.1">
    <property type="protein sequence ID" value="Y37D8A.14.1"/>
    <property type="gene ID" value="WBGene00012553"/>
</dbReference>
<dbReference type="GeneID" id="176707"/>
<dbReference type="KEGG" id="cel:CELE_Y37D8A.14"/>
<dbReference type="UCSC" id="Y37D8A.14.1">
    <property type="organism name" value="c. elegans"/>
</dbReference>
<dbReference type="AGR" id="WB:WBGene00012553"/>
<dbReference type="CTD" id="176707"/>
<dbReference type="WormBase" id="Y37D8A.14">
    <property type="protein sequence ID" value="CE20218"/>
    <property type="gene ID" value="WBGene00012553"/>
    <property type="gene designation" value="cox-5A"/>
</dbReference>
<dbReference type="eggNOG" id="KOG4077">
    <property type="taxonomic scope" value="Eukaryota"/>
</dbReference>
<dbReference type="GeneTree" id="ENSGT00390000001424"/>
<dbReference type="HOGENOM" id="CLU_099086_1_0_1"/>
<dbReference type="InParanoid" id="P55954"/>
<dbReference type="OMA" id="MEKWPAD"/>
<dbReference type="OrthoDB" id="5778907at2759"/>
<dbReference type="PhylomeDB" id="P55954"/>
<dbReference type="Reactome" id="R-CEL-9837999">
    <property type="pathway name" value="Mitochondrial protein degradation"/>
</dbReference>
<dbReference type="Reactome" id="R-CEL-9864848">
    <property type="pathway name" value="Complex IV assembly"/>
</dbReference>
<dbReference type="UniPathway" id="UPA00705"/>
<dbReference type="PRO" id="PR:P55954"/>
<dbReference type="Proteomes" id="UP000001940">
    <property type="component" value="Chromosome III"/>
</dbReference>
<dbReference type="Bgee" id="WBGene00012553">
    <property type="expression patterns" value="Expressed in larva and 4 other cell types or tissues"/>
</dbReference>
<dbReference type="GO" id="GO:0005743">
    <property type="term" value="C:mitochondrial inner membrane"/>
    <property type="evidence" value="ECO:0007669"/>
    <property type="project" value="UniProtKB-SubCell"/>
</dbReference>
<dbReference type="GO" id="GO:0045277">
    <property type="term" value="C:respiratory chain complex IV"/>
    <property type="evidence" value="ECO:0000318"/>
    <property type="project" value="GO_Central"/>
</dbReference>
<dbReference type="GO" id="GO:0046872">
    <property type="term" value="F:metal ion binding"/>
    <property type="evidence" value="ECO:0007669"/>
    <property type="project" value="UniProtKB-KW"/>
</dbReference>
<dbReference type="GO" id="GO:0006123">
    <property type="term" value="P:mitochondrial electron transport, cytochrome c to oxygen"/>
    <property type="evidence" value="ECO:0000315"/>
    <property type="project" value="WormBase"/>
</dbReference>
<dbReference type="CDD" id="cd00923">
    <property type="entry name" value="Cyt_c_Oxidase_Va"/>
    <property type="match status" value="1"/>
</dbReference>
<dbReference type="FunFam" id="1.25.40.40:FF:000001">
    <property type="entry name" value="Cytochrome c oxidase subunit VI"/>
    <property type="match status" value="1"/>
</dbReference>
<dbReference type="Gene3D" id="1.25.40.40">
    <property type="entry name" value="Cytochrome c oxidase, subunit Va/VI"/>
    <property type="match status" value="1"/>
</dbReference>
<dbReference type="InterPro" id="IPR003204">
    <property type="entry name" value="Cyt_c_oxidase_su5A/6"/>
</dbReference>
<dbReference type="InterPro" id="IPR036545">
    <property type="entry name" value="Cyt_c_oxidase_su5A/6_sf"/>
</dbReference>
<dbReference type="PANTHER" id="PTHR14200">
    <property type="entry name" value="CYTOCHROME C OXIDASE POLYPEPTIDE"/>
    <property type="match status" value="1"/>
</dbReference>
<dbReference type="PANTHER" id="PTHR14200:SF11">
    <property type="entry name" value="CYTOCHROME C OXIDASE SUBUNIT 5A, MITOCHONDRIAL"/>
    <property type="match status" value="1"/>
</dbReference>
<dbReference type="Pfam" id="PF02284">
    <property type="entry name" value="COX5A"/>
    <property type="match status" value="1"/>
</dbReference>
<dbReference type="SUPFAM" id="SSF48479">
    <property type="entry name" value="Cytochrome c oxidase subunit E"/>
    <property type="match status" value="1"/>
</dbReference>
<gene>
    <name evidence="4" type="primary">cox-5A</name>
    <name evidence="4" type="synonym">cco-2</name>
    <name evidence="4" type="ORF">Y37D8A.14</name>
</gene>
<accession>P55954</accession>
<accession>Q9XWV8</accession>